<keyword id="KW-0010">Activator</keyword>
<keyword id="KW-0025">Alternative splicing</keyword>
<keyword id="KW-0963">Cytoplasm</keyword>
<keyword id="KW-0238">DNA-binding</keyword>
<keyword id="KW-0539">Nucleus</keyword>
<keyword id="KW-0597">Phosphoprotein</keyword>
<keyword id="KW-1267">Proteomics identification</keyword>
<keyword id="KW-1185">Reference proteome</keyword>
<keyword id="KW-0804">Transcription</keyword>
<keyword id="KW-0805">Transcription regulation</keyword>
<sequence length="82" mass="8873">MATFPPATSAPQQPPGPEDEDSSLDESDLYSLAHSYLGGGGRKGRTKREAAANTNRPSPGGHERKLVTKLQNSERKKRGARR</sequence>
<gene>
    <name evidence="22" type="primary">NUPR1</name>
    <name type="synonym">COM1</name>
</gene>
<protein>
    <recommendedName>
        <fullName evidence="21">Nuclear protein 1</fullName>
    </recommendedName>
    <alternativeName>
        <fullName evidence="19">Candidate of metastasis 1</fullName>
    </alternativeName>
    <alternativeName>
        <fullName evidence="18">Protein p8</fullName>
    </alternativeName>
</protein>
<feature type="chain" id="PRO_0000058007" description="Nuclear protein 1">
    <location>
        <begin position="1"/>
        <end position="82"/>
    </location>
</feature>
<feature type="region of interest" description="Disordered" evidence="4">
    <location>
        <begin position="1"/>
        <end position="82"/>
    </location>
</feature>
<feature type="short sequence motif" description="Nuclear localization signal" evidence="3">
    <location>
        <begin position="65"/>
        <end position="82"/>
    </location>
</feature>
<feature type="compositionally biased region" description="Acidic residues" evidence="4">
    <location>
        <begin position="17"/>
        <end position="28"/>
    </location>
</feature>
<feature type="splice variant" id="VSP_053816" description="In isoform 2." evidence="20">
    <original>L</original>
    <variation>LGPLIMPMPTSPLTPALVT</variation>
    <location>
        <position position="37"/>
    </location>
</feature>
<feature type="mutagenesis site" description="Impairs interaction with RNF2." evidence="16">
    <original>A</original>
    <variation>Q</variation>
    <location>
        <position position="33"/>
    </location>
</feature>
<feature type="mutagenesis site" description="Impairs interaction with RNF2." evidence="16">
    <original>T</original>
    <variation>Q</variation>
    <location>
        <position position="68"/>
    </location>
</feature>
<feature type="sequence conflict" description="In Ref. 3; BAG35071." evidence="21" ref="3">
    <original>K</original>
    <variation>N</variation>
    <location>
        <position position="47"/>
    </location>
</feature>
<accession>O60356</accession>
<accession>B2R5C4</accession>
<accession>O60357</accession>
<accession>Q6FGG3</accession>
<evidence type="ECO:0000250" key="1">
    <source>
        <dbReference type="UniProtKB" id="O54842"/>
    </source>
</evidence>
<evidence type="ECO:0000250" key="2">
    <source>
        <dbReference type="UniProtKB" id="Q9WTK0"/>
    </source>
</evidence>
<evidence type="ECO:0000255" key="3"/>
<evidence type="ECO:0000256" key="4">
    <source>
        <dbReference type="SAM" id="MobiDB-lite"/>
    </source>
</evidence>
<evidence type="ECO:0000269" key="5">
    <source>
    </source>
</evidence>
<evidence type="ECO:0000269" key="6">
    <source>
    </source>
</evidence>
<evidence type="ECO:0000269" key="7">
    <source>
    </source>
</evidence>
<evidence type="ECO:0000269" key="8">
    <source>
    </source>
</evidence>
<evidence type="ECO:0000269" key="9">
    <source>
    </source>
</evidence>
<evidence type="ECO:0000269" key="10">
    <source>
    </source>
</evidence>
<evidence type="ECO:0000269" key="11">
    <source>
    </source>
</evidence>
<evidence type="ECO:0000269" key="12">
    <source>
    </source>
</evidence>
<evidence type="ECO:0000269" key="13">
    <source>
    </source>
</evidence>
<evidence type="ECO:0000269" key="14">
    <source>
    </source>
</evidence>
<evidence type="ECO:0000269" key="15">
    <source>
    </source>
</evidence>
<evidence type="ECO:0000269" key="16">
    <source>
    </source>
</evidence>
<evidence type="ECO:0000269" key="17">
    <source>
    </source>
</evidence>
<evidence type="ECO:0000303" key="18">
    <source>
    </source>
</evidence>
<evidence type="ECO:0000303" key="19">
    <source>
    </source>
</evidence>
<evidence type="ECO:0000303" key="20">
    <source>
    </source>
</evidence>
<evidence type="ECO:0000305" key="21"/>
<evidence type="ECO:0000312" key="22">
    <source>
        <dbReference type="HGNC" id="HGNC:29990"/>
    </source>
</evidence>
<reference key="1">
    <citation type="journal article" date="1999" name="Eur. J. Biochem.">
        <title>Cloning and expression of the human p8, a nuclear protein with mitogenic activity.</title>
        <authorList>
            <person name="Vasseur S."/>
            <person name="Mallo G.V."/>
            <person name="Fiedler F."/>
            <person name="Boedeker H."/>
            <person name="Canepa E."/>
            <person name="Moreno S."/>
            <person name="Iovanna J.L."/>
        </authorList>
    </citation>
    <scope>NUCLEOTIDE SEQUENCE [GENOMIC DNA / MRNA] (ISOFORM 1)</scope>
    <scope>SUBCELLULAR LOCATION</scope>
    <scope>TISSUE SPECIFICITY</scope>
    <source>
        <tissue>Pancreas</tissue>
    </source>
</reference>
<reference key="2">
    <citation type="journal article" date="1999" name="Cancer Res.">
        <title>Expression of a novel factor in human breast cancer cells with metastatic potential.</title>
        <authorList>
            <person name="Ree A.H."/>
            <person name="Tvermyr M."/>
            <person name="Engebraaten O."/>
            <person name="Rooman M."/>
            <person name="Rosok O."/>
            <person name="Hovig E."/>
            <person name="Meza-Zepeda L.A."/>
            <person name="Bruland O.S."/>
            <person name="Fodstad O."/>
        </authorList>
    </citation>
    <scope>NUCLEOTIDE SEQUENCE [MRNA] (ISOFORM 1)</scope>
    <source>
        <tissue>Mammary cancer</tissue>
    </source>
</reference>
<reference key="3">
    <citation type="journal article" date="2004" name="Nat. Genet.">
        <title>Complete sequencing and characterization of 21,243 full-length human cDNAs.</title>
        <authorList>
            <person name="Ota T."/>
            <person name="Suzuki Y."/>
            <person name="Nishikawa T."/>
            <person name="Otsuki T."/>
            <person name="Sugiyama T."/>
            <person name="Irie R."/>
            <person name="Wakamatsu A."/>
            <person name="Hayashi K."/>
            <person name="Sato H."/>
            <person name="Nagai K."/>
            <person name="Kimura K."/>
            <person name="Makita H."/>
            <person name="Sekine M."/>
            <person name="Obayashi M."/>
            <person name="Nishi T."/>
            <person name="Shibahara T."/>
            <person name="Tanaka T."/>
            <person name="Ishii S."/>
            <person name="Yamamoto J."/>
            <person name="Saito K."/>
            <person name="Kawai Y."/>
            <person name="Isono Y."/>
            <person name="Nakamura Y."/>
            <person name="Nagahari K."/>
            <person name="Murakami K."/>
            <person name="Yasuda T."/>
            <person name="Iwayanagi T."/>
            <person name="Wagatsuma M."/>
            <person name="Shiratori A."/>
            <person name="Sudo H."/>
            <person name="Hosoiri T."/>
            <person name="Kaku Y."/>
            <person name="Kodaira H."/>
            <person name="Kondo H."/>
            <person name="Sugawara M."/>
            <person name="Takahashi M."/>
            <person name="Kanda K."/>
            <person name="Yokoi T."/>
            <person name="Furuya T."/>
            <person name="Kikkawa E."/>
            <person name="Omura Y."/>
            <person name="Abe K."/>
            <person name="Kamihara K."/>
            <person name="Katsuta N."/>
            <person name="Sato K."/>
            <person name="Tanikawa M."/>
            <person name="Yamazaki M."/>
            <person name="Ninomiya K."/>
            <person name="Ishibashi T."/>
            <person name="Yamashita H."/>
            <person name="Murakawa K."/>
            <person name="Fujimori K."/>
            <person name="Tanai H."/>
            <person name="Kimata M."/>
            <person name="Watanabe M."/>
            <person name="Hiraoka S."/>
            <person name="Chiba Y."/>
            <person name="Ishida S."/>
            <person name="Ono Y."/>
            <person name="Takiguchi S."/>
            <person name="Watanabe S."/>
            <person name="Yosida M."/>
            <person name="Hotuta T."/>
            <person name="Kusano J."/>
            <person name="Kanehori K."/>
            <person name="Takahashi-Fujii A."/>
            <person name="Hara H."/>
            <person name="Tanase T.-O."/>
            <person name="Nomura Y."/>
            <person name="Togiya S."/>
            <person name="Komai F."/>
            <person name="Hara R."/>
            <person name="Takeuchi K."/>
            <person name="Arita M."/>
            <person name="Imose N."/>
            <person name="Musashino K."/>
            <person name="Yuuki H."/>
            <person name="Oshima A."/>
            <person name="Sasaki N."/>
            <person name="Aotsuka S."/>
            <person name="Yoshikawa Y."/>
            <person name="Matsunawa H."/>
            <person name="Ichihara T."/>
            <person name="Shiohata N."/>
            <person name="Sano S."/>
            <person name="Moriya S."/>
            <person name="Momiyama H."/>
            <person name="Satoh N."/>
            <person name="Takami S."/>
            <person name="Terashima Y."/>
            <person name="Suzuki O."/>
            <person name="Nakagawa S."/>
            <person name="Senoh A."/>
            <person name="Mizoguchi H."/>
            <person name="Goto Y."/>
            <person name="Shimizu F."/>
            <person name="Wakebe H."/>
            <person name="Hishigaki H."/>
            <person name="Watanabe T."/>
            <person name="Sugiyama A."/>
            <person name="Takemoto M."/>
            <person name="Kawakami B."/>
            <person name="Yamazaki M."/>
            <person name="Watanabe K."/>
            <person name="Kumagai A."/>
            <person name="Itakura S."/>
            <person name="Fukuzumi Y."/>
            <person name="Fujimori Y."/>
            <person name="Komiyama M."/>
            <person name="Tashiro H."/>
            <person name="Tanigami A."/>
            <person name="Fujiwara T."/>
            <person name="Ono T."/>
            <person name="Yamada K."/>
            <person name="Fujii Y."/>
            <person name="Ozaki K."/>
            <person name="Hirao M."/>
            <person name="Ohmori Y."/>
            <person name="Kawabata A."/>
            <person name="Hikiji T."/>
            <person name="Kobatake N."/>
            <person name="Inagaki H."/>
            <person name="Ikema Y."/>
            <person name="Okamoto S."/>
            <person name="Okitani R."/>
            <person name="Kawakami T."/>
            <person name="Noguchi S."/>
            <person name="Itoh T."/>
            <person name="Shigeta K."/>
            <person name="Senba T."/>
            <person name="Matsumura K."/>
            <person name="Nakajima Y."/>
            <person name="Mizuno T."/>
            <person name="Morinaga M."/>
            <person name="Sasaki M."/>
            <person name="Togashi T."/>
            <person name="Oyama M."/>
            <person name="Hata H."/>
            <person name="Watanabe M."/>
            <person name="Komatsu T."/>
            <person name="Mizushima-Sugano J."/>
            <person name="Satoh T."/>
            <person name="Shirai Y."/>
            <person name="Takahashi Y."/>
            <person name="Nakagawa K."/>
            <person name="Okumura K."/>
            <person name="Nagase T."/>
            <person name="Nomura N."/>
            <person name="Kikuchi H."/>
            <person name="Masuho Y."/>
            <person name="Yamashita R."/>
            <person name="Nakai K."/>
            <person name="Yada T."/>
            <person name="Nakamura Y."/>
            <person name="Ohara O."/>
            <person name="Isogai T."/>
            <person name="Sugano S."/>
        </authorList>
    </citation>
    <scope>NUCLEOTIDE SEQUENCE [LARGE SCALE MRNA] (ISOFORM 1)</scope>
    <source>
        <tissue>Cerebellum</tissue>
    </source>
</reference>
<reference key="4">
    <citation type="journal article" date="2005" name="Mamm. Genome">
        <title>Transcriptome analysis of human gastric cancer.</title>
        <authorList>
            <person name="Oh J.H."/>
            <person name="Yang J.O."/>
            <person name="Hahn Y."/>
            <person name="Kim M.R."/>
            <person name="Byun S.S."/>
            <person name="Jeon Y.J."/>
            <person name="Kim J.M."/>
            <person name="Song K.S."/>
            <person name="Noh S.M."/>
            <person name="Kim S."/>
            <person name="Yoo H.S."/>
            <person name="Kim Y.S."/>
            <person name="Kim N.S."/>
        </authorList>
    </citation>
    <scope>NUCLEOTIDE SEQUENCE [LARGE SCALE MRNA] (ISOFORM 2)</scope>
</reference>
<reference key="5">
    <citation type="submission" date="2003-05" db="EMBL/GenBank/DDBJ databases">
        <title>Cloning of human full-length CDSs in BD Creator(TM) system donor vector.</title>
        <authorList>
            <person name="Kalnine N."/>
            <person name="Chen X."/>
            <person name="Rolfs A."/>
            <person name="Halleck A."/>
            <person name="Hines L."/>
            <person name="Eisenstein S."/>
            <person name="Koundinya M."/>
            <person name="Raphael J."/>
            <person name="Moreira D."/>
            <person name="Kelley T."/>
            <person name="LaBaer J."/>
            <person name="Lin Y."/>
            <person name="Phelan M."/>
            <person name="Farmer A."/>
        </authorList>
    </citation>
    <scope>NUCLEOTIDE SEQUENCE [LARGE SCALE MRNA] (ISOFORM 1)</scope>
</reference>
<reference key="6">
    <citation type="submission" date="2004-06" db="EMBL/GenBank/DDBJ databases">
        <title>Cloning of human full open reading frames in Gateway(TM) system entry vector (pDONR201).</title>
        <authorList>
            <person name="Ebert L."/>
            <person name="Schick M."/>
            <person name="Neubert P."/>
            <person name="Schatten R."/>
            <person name="Henze S."/>
            <person name="Korn B."/>
        </authorList>
    </citation>
    <scope>NUCLEOTIDE SEQUENCE [LARGE SCALE MRNA] (ISOFORM 1)</scope>
</reference>
<reference key="7">
    <citation type="journal article" date="1999" name="Genomics">
        <title>Genome duplications and other features in 12 Mb of DNA sequence from human chromosome 16p and 16q.</title>
        <authorList>
            <person name="Loftus B.J."/>
            <person name="Kim U.-J."/>
            <person name="Sneddon V.P."/>
            <person name="Kalush F."/>
            <person name="Brandon R."/>
            <person name="Fuhrmann J."/>
            <person name="Mason T."/>
            <person name="Crosby M.L."/>
            <person name="Barnstead M."/>
            <person name="Cronin L."/>
            <person name="Mays A.D."/>
            <person name="Cao Y."/>
            <person name="Xu R.X."/>
            <person name="Kang H.-L."/>
            <person name="Mitchell S."/>
            <person name="Eichler E.E."/>
            <person name="Harris P.C."/>
            <person name="Venter J.C."/>
            <person name="Adams M.D."/>
        </authorList>
    </citation>
    <scope>NUCLEOTIDE SEQUENCE [LARGE SCALE GENOMIC DNA]</scope>
</reference>
<reference key="8">
    <citation type="submission" date="2005-07" db="EMBL/GenBank/DDBJ databases">
        <authorList>
            <person name="Mural R.J."/>
            <person name="Istrail S."/>
            <person name="Sutton G.G."/>
            <person name="Florea L."/>
            <person name="Halpern A.L."/>
            <person name="Mobarry C.M."/>
            <person name="Lippert R."/>
            <person name="Walenz B."/>
            <person name="Shatkay H."/>
            <person name="Dew I."/>
            <person name="Miller J.R."/>
            <person name="Flanigan M.J."/>
            <person name="Edwards N.J."/>
            <person name="Bolanos R."/>
            <person name="Fasulo D."/>
            <person name="Halldorsson B.V."/>
            <person name="Hannenhalli S."/>
            <person name="Turner R."/>
            <person name="Yooseph S."/>
            <person name="Lu F."/>
            <person name="Nusskern D.R."/>
            <person name="Shue B.C."/>
            <person name="Zheng X.H."/>
            <person name="Zhong F."/>
            <person name="Delcher A.L."/>
            <person name="Huson D.H."/>
            <person name="Kravitz S.A."/>
            <person name="Mouchard L."/>
            <person name="Reinert K."/>
            <person name="Remington K.A."/>
            <person name="Clark A.G."/>
            <person name="Waterman M.S."/>
            <person name="Eichler E.E."/>
            <person name="Adams M.D."/>
            <person name="Hunkapiller M.W."/>
            <person name="Myers E.W."/>
            <person name="Venter J.C."/>
        </authorList>
    </citation>
    <scope>NUCLEOTIDE SEQUENCE [LARGE SCALE GENOMIC DNA]</scope>
</reference>
<reference key="9">
    <citation type="journal article" date="2004" name="Genome Res.">
        <title>The status, quality, and expansion of the NIH full-length cDNA project: the Mammalian Gene Collection (MGC).</title>
        <authorList>
            <consortium name="The MGC Project Team"/>
        </authorList>
    </citation>
    <scope>NUCLEOTIDE SEQUENCE [LARGE SCALE MRNA] (ISOFORM 1)</scope>
    <source>
        <tissue>Kidney</tissue>
    </source>
</reference>
<reference key="10">
    <citation type="journal article" date="2001" name="J. Biol. Chem.">
        <title>Human p8 is a HMG-I/Y-like protein with DNA binding activity enhanced by phosphorylation.</title>
        <authorList>
            <person name="Encinar J.A."/>
            <person name="Mallo G.V."/>
            <person name="Mizyrycki C."/>
            <person name="Giono L."/>
            <person name="Gonzalez-Ros J.M."/>
            <person name="Rico M."/>
            <person name="Canepa E."/>
            <person name="Moreno S."/>
            <person name="Neira J.L."/>
            <person name="Iovanna J.L."/>
        </authorList>
    </citation>
    <scope>DNA-BINDING</scope>
    <scope>MONOMER</scope>
    <scope>PHOSPHORYLATION</scope>
    <scope>FUNCTION</scope>
</reference>
<reference key="11">
    <citation type="journal article" date="2002" name="J. Biol. Chem.">
        <title>The HMG-I/Y-related protein p8 binds to p300 and Pax2 trans-activation domain-interacting protein to regulate the trans-activation activity of the Pax2A and Pax2B transcription factors on the glucagon gene promoter.</title>
        <authorList>
            <person name="Hoffmeister A."/>
            <person name="Ropolo A."/>
            <person name="Vasseur S."/>
            <person name="Mallo G.V."/>
            <person name="Bodeker H."/>
            <person name="Ritz-Laser B."/>
            <person name="Dressler G.R."/>
            <person name="Vaccaro M.I."/>
            <person name="Dagorn J.C."/>
            <person name="Moreno S."/>
            <person name="Iovanna J.L."/>
        </authorList>
    </citation>
    <scope>INTERACTION WITH EP300 AND PAXIP1</scope>
    <scope>ACETYLATION</scope>
    <scope>FUNCTION</scope>
</reference>
<reference key="12">
    <citation type="journal article" date="2006" name="Biochem. Biophys. Res. Commun.">
        <title>Interaction of the stress protein p8 with Jab1 is required for Jab1-dependent p27 nuclear-to-cytoplasm translocation.</title>
        <authorList>
            <person name="Malicet C."/>
            <person name="Hoffmeister A."/>
            <person name="Moreno S."/>
            <person name="Closa D."/>
            <person name="Dagorn J.C."/>
            <person name="Vasseur S."/>
            <person name="Iovanna J.L."/>
        </authorList>
    </citation>
    <scope>INTERACTION WITH COPS5</scope>
    <scope>FUNCTION</scope>
    <scope>SUBCELLULAR LOCATION</scope>
</reference>
<reference key="13">
    <citation type="journal article" date="2006" name="Proc. Natl. Acad. Sci. U.S.A.">
        <title>Regulation of apoptosis by the p8/prothymosin alpha complex.</title>
        <authorList>
            <person name="Malicet C."/>
            <person name="Giroux V."/>
            <person name="Vasseur S."/>
            <person name="Dagorn J.C."/>
            <person name="Neira J.L."/>
            <person name="Iovanna J.L."/>
        </authorList>
    </citation>
    <scope>INTERACTION WITH PTMA</scope>
    <scope>FUNCTION</scope>
</reference>
<reference key="14">
    <citation type="journal article" date="2008" name="Curr. Cancer Drug Targets">
        <title>NUPR1 interacts with p53, transcriptionally regulates p21 and rescues breast epithelial cells from doxorubicin-induced genotoxic stress.</title>
        <authorList>
            <person name="Clark D.W."/>
            <person name="Mitra A."/>
            <person name="Fillmore R.A."/>
            <person name="Jiang W.G."/>
            <person name="Samant R.S."/>
            <person name="Fodstad O."/>
            <person name="Shevde L.A."/>
        </authorList>
    </citation>
    <scope>INDUCTION</scope>
    <scope>INTERACTION WITH TP53 AND EP300</scope>
    <scope>FUNCTION</scope>
</reference>
<reference key="15">
    <citation type="journal article" date="2009" name="J. Cell. Physiol.">
        <title>p8/nupr1 regulates DNA-repair activity after double-strand gamma irradiation-induced DNA damage.</title>
        <authorList>
            <person name="Gironella M."/>
            <person name="Malicet C."/>
            <person name="Cano C."/>
            <person name="Sandi M.J."/>
            <person name="Hamidi T."/>
            <person name="Tauil R.M."/>
            <person name="Baston M."/>
            <person name="Valaco P."/>
            <person name="Moreno S."/>
            <person name="Lopez F."/>
            <person name="Neira J.L."/>
            <person name="Dagorn J.C."/>
            <person name="Iovanna J.L."/>
        </authorList>
    </citation>
    <scope>FUNCTION</scope>
    <scope>INTERACTION WITH MSL1 AND MORF4L1</scope>
    <scope>INDUCTION BY GAMMA-IRRADIATION</scope>
</reference>
<reference key="16">
    <citation type="journal article" date="2009" name="J. Cell Sci.">
        <title>The small chromatin-binding protein p8 coordinates the association of anti-proliferative and pro-myogenic proteins at the myogenin promoter.</title>
        <authorList>
            <person name="Sambasivan R."/>
            <person name="Cheedipudi S."/>
            <person name="Pasupuleti N."/>
            <person name="Saleh A."/>
            <person name="Pavlath G.K."/>
            <person name="Dhawan J."/>
        </authorList>
    </citation>
    <scope>INTERACTION WITH MYOD1</scope>
    <scope>FUNCTION</scope>
</reference>
<reference key="17">
    <citation type="journal article" date="2010" name="Mol. Biol. Cell">
        <title>Deficiency of the transcriptional regulator p8 results in increased autophagy and apoptosis, and causes impaired heart function.</title>
        <authorList>
            <person name="Kong D.K."/>
            <person name="Georgescu S.P."/>
            <person name="Cano C."/>
            <person name="Aronovitz M.J."/>
            <person name="Iovanna J.L."/>
            <person name="Patten R.D."/>
            <person name="Kyriakis J.M."/>
            <person name="Goruppi S."/>
        </authorList>
    </citation>
    <scope>INTERACTION WITH FOXO3</scope>
    <scope>FUNCTION</scope>
</reference>
<reference key="18">
    <citation type="journal article" date="2012" name="FEBS Lett.">
        <title>Cytoplasmic translocation of p21 mediates NUPR1-induced chemoresistance: NUPR1 and p21 in chemoresistance.</title>
        <authorList>
            <person name="Vincent A.J."/>
            <person name="Ren S."/>
            <person name="Harris L.G."/>
            <person name="Devine D.J."/>
            <person name="Samant R.S."/>
            <person name="Fodstad O."/>
            <person name="Shevde L.A."/>
        </authorList>
    </citation>
    <scope>FUNCTION</scope>
</reference>
<reference key="19">
    <citation type="journal article" date="2012" name="J. Clin. Invest.">
        <title>Nuclear protein 1 promotes pancreatic cancer development and protects cells from stress by inhibiting apoptosis.</title>
        <authorList>
            <person name="Hamidi T."/>
            <person name="Algul H."/>
            <person name="Cano C.E."/>
            <person name="Sandi M.J."/>
            <person name="Molejon M.I."/>
            <person name="Riemann M."/>
            <person name="Calvo E.L."/>
            <person name="Lomberk G."/>
            <person name="Dagorn J.C."/>
            <person name="Weih F."/>
            <person name="Urrutia R."/>
            <person name="Schmid R.M."/>
            <person name="Iovanna J.L."/>
        </authorList>
    </citation>
    <scope>FUNCTION</scope>
    <scope>INDUCTION BY NUTRIENT DEPRIVATION</scope>
</reference>
<reference key="20">
    <citation type="journal article" date="2017" name="Proc. Natl. Acad. Sci. U.S.A.">
        <title>Intrinsically disordered chromatin protein NUPR1 binds to the C-terminal region of Polycomb RING1B.</title>
        <authorList>
            <person name="Santofimia-Castano P."/>
            <person name="Rizzuti B."/>
            <person name="Pey A.L."/>
            <person name="Soubeyran P."/>
            <person name="Vidal M."/>
            <person name="Urrutia R."/>
            <person name="Iovanna J.L."/>
            <person name="Neira J.L."/>
        </authorList>
    </citation>
    <scope>INTERACTION WITH RNF2</scope>
    <scope>MUTAGENESIS OF ALA-33 AND THR-68</scope>
</reference>
<reference key="21">
    <citation type="journal article" date="2018" name="Sci. Rep.">
        <title>Inactivation of NUPR1 promotes cell death by coupling ER-stress responses with necrosis.</title>
        <authorList>
            <person name="Santofimia-Castano P."/>
            <person name="Lan W."/>
            <person name="Bintz J."/>
            <person name="Gayet O."/>
            <person name="Carrier A."/>
            <person name="Lomberk G."/>
            <person name="Neira J.L."/>
            <person name="Gonzalez A."/>
            <person name="Urrutia R."/>
            <person name="Soubeyran P."/>
            <person name="Iovanna J."/>
        </authorList>
    </citation>
    <scope>FUNCTION</scope>
</reference>
<name>NUPR1_HUMAN</name>
<comment type="function">
    <text evidence="1 2 6 7 8 9 10 11 12 13 14 15 17">Transcription regulator that converts stress signals into a program of gene expression that empowers cells with resistance to the stress induced by a change in their microenvironment. Thereby participates in the regulation of many processes namely cell-cycle, apoptosis, autophagy and DNA repair responses (PubMed:11056169, PubMed:11940591, PubMed:16300740, PubMed:16478804, PubMed:18690848, PubMed:19650074, PubMed:19723804, PubMed:20181828, PubMed:22565310, PubMed:22858377, PubMed:30451898). Controls cell cycle progression and protects cells from genotoxic stress induced by doxorubicin through the complex formation with TP53 and EP300 that binds CDKN1A promoter leading to transcriptional induction of CDKN1A (PubMed:18690848). Protects pancreatic cancer cells from stress-induced cell death by binding the RELB promoter and activating its transcription, leading to IER3 transactivation (PubMed:22565310). Negatively regulates apoptosis through interaction with PTMA (PubMed:16478804). Inhibits autophagy-induced apoptosis in cardiac cells through FOXO3 interaction, inducing cytoplasmic translocation of FOXO3 thereby preventing the FOXO3 association with the pro-autophagic BNIP3 promoter (PubMed:20181828). Inhibits cell growth and facilitates programmed cell death by apoptosis after adriamycin-induced DNA damage through transactivation of TP53 (By similarity). Regulates methamphetamine-induced apoptosis and autophagy through DDIT3-mediated endoplasmic reticulum stress pathway (By similarity). Participates in DNA repair following gamma-irradiation by facilitating DNA access of the transcription machinery through interaction with MSL1 leading to inhibition of histone H4' Lys-16' acetylation (H4K16ac) (PubMed:19650074). Coactivator of PAX2 transcription factor activity, both by recruiting EP300 to increase PAX2 transcription factor activity and by binding PAXIP1 to suppress PAXIP1-induced inhibition on PAX2 (PubMed:11940591). Positively regulates cell cycle progression through interaction with COPS5 inducing cytoplasmic translocation of CDKN1B leading to the CDKN1B degradation (PubMed:16300740). Coordinates, through its interaction with EP300, the assiociation of MYOD1, EP300 and DDX5 to the MYOG promoter, leading to inhibition of cell-cycle progression and myogenic differentiation promotion (PubMed:19723804). Negatively regulates beta cell proliferation via inhibition of cell-cycle regulatory genes expression through the suppression of their promoter activities (By similarity). Also required for LHB expression and ovarian maturation (By similarity). Exacerbates CNS inflammation and demyelination upon cuprizone treatment (By similarity).</text>
</comment>
<comment type="subunit">
    <text evidence="2 7 8 9 10 11 12 13 16">Monomer. Directly interacts with MSL1 and binds MORF4L1, two components of histone acetyltransferase complex; the interaction with MORF4L1 may be mediated by MSL1 (PubMed:19650074). Interacts with EP300; this interaction enhances the effect of EP300 on PAX2 transcription factor activity (PubMed:11940591). Interacts with PAXIP1; this interaction prevents PAXIP1 inhibition of PAX2 transcription factor activity (PubMed:11940591). Interacts with COPS5; this interaction allows COPS5-dependent CDKN1B nuclear to cytoplasm translocation (PubMed:16300740). Interacts with RNF2 (PubMed:28720707). Interacts with FOXO3; this interaction represses FOXO3 transactivation (PubMed:20181828). Interacts with PTMA; negatively regulates apoptotic process (PubMed:16478804). Interacts with MYOD1, EP300 and DDX5; this interaction coordinates the association of anti-proliferative and pro-myogenic proteins at the myogenin promoter (By similarity) (PubMed:19723804). Interacts with TP53; interaction is stress-dependent (PubMed:18690848). Forms a complex with EP300 and TP53; this complex binds CDKN1A promoter leading to transcriptional induction of CDKN1A (PubMed:18690848).</text>
</comment>
<comment type="interaction">
    <interactant intactId="EBI-3908808">
        <id>O60356</id>
    </interactant>
    <interactant intactId="EBI-1028956">
        <id>P17655</id>
        <label>CAPN2</label>
    </interactant>
    <organismsDiffer>false</organismsDiffer>
    <experiments>3</experiments>
</comment>
<comment type="interaction">
    <interactant intactId="EBI-3908808">
        <id>O60356</id>
    </interactant>
    <interactant intactId="EBI-11953200">
        <id>Q494V2-2</id>
        <label>CFAP100</label>
    </interactant>
    <organismsDiffer>false</organismsDiffer>
    <experiments>3</experiments>
</comment>
<comment type="interaction">
    <interactant intactId="EBI-3908808">
        <id>O60356</id>
    </interactant>
    <interactant intactId="EBI-2557276">
        <id>O15534</id>
        <label>PER1</label>
    </interactant>
    <organismsDiffer>false</organismsDiffer>
    <experiments>3</experiments>
</comment>
<comment type="interaction">
    <interactant intactId="EBI-3908808">
        <id>O60356</id>
    </interactant>
    <interactant intactId="EBI-2682091">
        <id>P06454</id>
        <label>PTMA</label>
    </interactant>
    <organismsDiffer>false</organismsDiffer>
    <experiments>7</experiments>
</comment>
<comment type="subcellular location">
    <subcellularLocation>
        <location evidence="5 8">Nucleus</location>
    </subcellularLocation>
    <subcellularLocation>
        <location evidence="8">Cytoplasm</location>
    </subcellularLocation>
    <subcellularLocation>
        <location evidence="8">Cytoplasm</location>
        <location evidence="8">Perinuclear region</location>
    </subcellularLocation>
</comment>
<comment type="alternative products">
    <event type="alternative splicing"/>
    <isoform>
        <id>O60356-1</id>
        <name>1</name>
        <sequence type="displayed"/>
    </isoform>
    <isoform>
        <id>O60356-2</id>
        <name>2</name>
        <sequence type="described" ref="VSP_053816"/>
    </isoform>
</comment>
<comment type="tissue specificity">
    <text evidence="5">Widely expressed, with high levels in liver, pancreas, prostate, ovary, colon, thyroid, spinal cord, trachea and adrenal gland, moderate levels in heart, placenta, lung, skeletal muscle, kidney, testis, small intestine, stomach and lymph node, and low levels in brain, spleen, thymus and bone marrow. Not detected in peripheral blood leukocytes.</text>
</comment>
<comment type="induction">
    <text evidence="10 11 14">Up-regulated by stress agents, such as nutrient deprivation (at protein level) (PubMed:22565310). Up-regulation by gamma-irradiation is eventually followed by down-regulation (PubMed:19650074). Expression increases with the tumor aggressiveness. up-regulated by DNA-damaging agent such as doxorubicin (PubMed:18690848).</text>
</comment>
<comment type="PTM">
    <text evidence="6">Phosphorylated in vitro by PKA and CK. Phosphorylation promotes DNA-binding activity.</text>
</comment>
<comment type="PTM">
    <text evidence="7">Acetylated by EP300 in vitro.</text>
</comment>
<comment type="miscellaneous">
    <text evidence="10 14 15">Mediates resistance to anticancer drugs, namely taxol, doxorubicin, gemcitabine.</text>
</comment>
<comment type="similarity">
    <text evidence="21">Belongs to the NUPR family.</text>
</comment>
<comment type="sequence caution" evidence="21">
    <conflict type="erroneous gene model prediction">
        <sequence resource="EMBL-CDS" id="AAC05335"/>
    </conflict>
</comment>
<proteinExistence type="evidence at protein level"/>
<dbReference type="EMBL" id="AF069073">
    <property type="protein sequence ID" value="AAC19384.1"/>
    <property type="molecule type" value="mRNA"/>
</dbReference>
<dbReference type="EMBL" id="AF069074">
    <property type="protein sequence ID" value="AAC19385.1"/>
    <property type="molecule type" value="Genomic_DNA"/>
</dbReference>
<dbReference type="EMBL" id="AF135266">
    <property type="protein sequence ID" value="AAD49221.1"/>
    <property type="molecule type" value="mRNA"/>
</dbReference>
<dbReference type="EMBL" id="AK312135">
    <property type="protein sequence ID" value="BAG35071.1"/>
    <property type="molecule type" value="mRNA"/>
</dbReference>
<dbReference type="EMBL" id="BM792961">
    <property type="status" value="NOT_ANNOTATED_CDS"/>
    <property type="molecule type" value="mRNA"/>
</dbReference>
<dbReference type="EMBL" id="BT006896">
    <property type="protein sequence ID" value="AAP35542.1"/>
    <property type="molecule type" value="mRNA"/>
</dbReference>
<dbReference type="EMBL" id="CR542144">
    <property type="protein sequence ID" value="CAG46941.1"/>
    <property type="molecule type" value="mRNA"/>
</dbReference>
<dbReference type="EMBL" id="AC002425">
    <property type="protein sequence ID" value="AAC05336.1"/>
    <property type="molecule type" value="Genomic_DNA"/>
</dbReference>
<dbReference type="EMBL" id="AC002425">
    <property type="protein sequence ID" value="AAC05335.1"/>
    <property type="status" value="ALT_SEQ"/>
    <property type="molecule type" value="Genomic_DNA"/>
</dbReference>
<dbReference type="EMBL" id="CH471279">
    <property type="protein sequence ID" value="EAW52274.1"/>
    <property type="molecule type" value="Genomic_DNA"/>
</dbReference>
<dbReference type="EMBL" id="BC002434">
    <property type="protein sequence ID" value="AAH02434.1"/>
    <property type="molecule type" value="mRNA"/>
</dbReference>
<dbReference type="CCDS" id="CCDS10634.1">
    <molecule id="O60356-1"/>
</dbReference>
<dbReference type="CCDS" id="CCDS42137.1">
    <molecule id="O60356-2"/>
</dbReference>
<dbReference type="RefSeq" id="NP_001035948.1">
    <molecule id="O60356-2"/>
    <property type="nucleotide sequence ID" value="NM_001042483.2"/>
</dbReference>
<dbReference type="RefSeq" id="NP_036517.1">
    <molecule id="O60356-1"/>
    <property type="nucleotide sequence ID" value="NM_012385.3"/>
</dbReference>
<dbReference type="BMRB" id="O60356"/>
<dbReference type="BioGRID" id="117695">
    <property type="interactions" value="683"/>
</dbReference>
<dbReference type="DIP" id="DIP-61114N"/>
<dbReference type="FunCoup" id="O60356">
    <property type="interactions" value="252"/>
</dbReference>
<dbReference type="IntAct" id="O60356">
    <property type="interactions" value="24"/>
</dbReference>
<dbReference type="STRING" id="9606.ENSP00000379003"/>
<dbReference type="iPTMnet" id="O60356"/>
<dbReference type="PhosphoSitePlus" id="O60356"/>
<dbReference type="BioMuta" id="NUPR1"/>
<dbReference type="MassIVE" id="O60356"/>
<dbReference type="PeptideAtlas" id="O60356"/>
<dbReference type="ProteomicsDB" id="49379">
    <molecule id="O60356-1"/>
</dbReference>
<dbReference type="Pumba" id="O60356"/>
<dbReference type="Antibodypedia" id="13028">
    <property type="antibodies" value="151 antibodies from 26 providers"/>
</dbReference>
<dbReference type="DNASU" id="26471"/>
<dbReference type="Ensembl" id="ENST00000324873.8">
    <molecule id="O60356-1"/>
    <property type="protein sequence ID" value="ENSP00000315559.7"/>
    <property type="gene ID" value="ENSG00000176046.9"/>
</dbReference>
<dbReference type="Ensembl" id="ENST00000395641.2">
    <molecule id="O60356-2"/>
    <property type="protein sequence ID" value="ENSP00000379003.2"/>
    <property type="gene ID" value="ENSG00000176046.9"/>
</dbReference>
<dbReference type="GeneID" id="26471"/>
<dbReference type="KEGG" id="hsa:26471"/>
<dbReference type="MANE-Select" id="ENST00000324873.8">
    <property type="protein sequence ID" value="ENSP00000315559.7"/>
    <property type="RefSeq nucleotide sequence ID" value="NM_012385.3"/>
    <property type="RefSeq protein sequence ID" value="NP_036517.1"/>
</dbReference>
<dbReference type="UCSC" id="uc002dqd.2">
    <molecule id="O60356-1"/>
    <property type="organism name" value="human"/>
</dbReference>
<dbReference type="AGR" id="HGNC:29990"/>
<dbReference type="CTD" id="26471"/>
<dbReference type="DisGeNET" id="26471"/>
<dbReference type="GeneCards" id="NUPR1"/>
<dbReference type="HGNC" id="HGNC:29990">
    <property type="gene designation" value="NUPR1"/>
</dbReference>
<dbReference type="HPA" id="ENSG00000176046">
    <property type="expression patterns" value="Tissue enhanced (pancreas)"/>
</dbReference>
<dbReference type="MIM" id="614812">
    <property type="type" value="gene"/>
</dbReference>
<dbReference type="neXtProt" id="NX_O60356"/>
<dbReference type="OpenTargets" id="ENSG00000176046"/>
<dbReference type="PharmGKB" id="PA165450395"/>
<dbReference type="VEuPathDB" id="HostDB:ENSG00000176046"/>
<dbReference type="GeneTree" id="ENSGT00530000064242"/>
<dbReference type="HOGENOM" id="CLU_180450_1_0_1"/>
<dbReference type="InParanoid" id="O60356"/>
<dbReference type="OMA" id="EAFFDEY"/>
<dbReference type="OrthoDB" id="10030453at2759"/>
<dbReference type="PAN-GO" id="O60356">
    <property type="GO annotations" value="3 GO annotations based on evolutionary models"/>
</dbReference>
<dbReference type="PhylomeDB" id="O60356"/>
<dbReference type="TreeFam" id="TF324649"/>
<dbReference type="PathwayCommons" id="O60356"/>
<dbReference type="SignaLink" id="O60356"/>
<dbReference type="SIGNOR" id="O60356"/>
<dbReference type="BioGRID-ORCS" id="26471">
    <property type="hits" value="9 hits in 1149 CRISPR screens"/>
</dbReference>
<dbReference type="ChiTaRS" id="NUPR1">
    <property type="organism name" value="human"/>
</dbReference>
<dbReference type="GeneWiki" id="NUPR1"/>
<dbReference type="GenomeRNAi" id="26471"/>
<dbReference type="Pharos" id="O60356">
    <property type="development level" value="Tbio"/>
</dbReference>
<dbReference type="PRO" id="PR:O60356"/>
<dbReference type="Proteomes" id="UP000005640">
    <property type="component" value="Chromosome 16"/>
</dbReference>
<dbReference type="RNAct" id="O60356">
    <property type="molecule type" value="protein"/>
</dbReference>
<dbReference type="Bgee" id="ENSG00000176046">
    <property type="expression patterns" value="Expressed in left lobe of thyroid gland and 95 other cell types or tissues"/>
</dbReference>
<dbReference type="ExpressionAtlas" id="O60356">
    <property type="expression patterns" value="baseline and differential"/>
</dbReference>
<dbReference type="GO" id="GO:0005737">
    <property type="term" value="C:cytoplasm"/>
    <property type="evidence" value="ECO:0000314"/>
    <property type="project" value="UniProtKB"/>
</dbReference>
<dbReference type="GO" id="GO:0045171">
    <property type="term" value="C:intercellular bridge"/>
    <property type="evidence" value="ECO:0000314"/>
    <property type="project" value="HPA"/>
</dbReference>
<dbReference type="GO" id="GO:0005654">
    <property type="term" value="C:nucleoplasm"/>
    <property type="evidence" value="ECO:0000314"/>
    <property type="project" value="HPA"/>
</dbReference>
<dbReference type="GO" id="GO:0005634">
    <property type="term" value="C:nucleus"/>
    <property type="evidence" value="ECO:0000314"/>
    <property type="project" value="UniProtKB"/>
</dbReference>
<dbReference type="GO" id="GO:0048471">
    <property type="term" value="C:perinuclear region of cytoplasm"/>
    <property type="evidence" value="ECO:0000314"/>
    <property type="project" value="UniProtKB"/>
</dbReference>
<dbReference type="GO" id="GO:0032993">
    <property type="term" value="C:protein-DNA complex"/>
    <property type="evidence" value="ECO:0000314"/>
    <property type="project" value="CAFA"/>
</dbReference>
<dbReference type="GO" id="GO:0010698">
    <property type="term" value="F:acetyltransferase activator activity"/>
    <property type="evidence" value="ECO:0000250"/>
    <property type="project" value="UniProtKB"/>
</dbReference>
<dbReference type="GO" id="GO:0003682">
    <property type="term" value="F:chromatin binding"/>
    <property type="evidence" value="ECO:0007669"/>
    <property type="project" value="Ensembl"/>
</dbReference>
<dbReference type="GO" id="GO:0003677">
    <property type="term" value="F:DNA binding"/>
    <property type="evidence" value="ECO:0000314"/>
    <property type="project" value="UniProtKB"/>
</dbReference>
<dbReference type="GO" id="GO:0003713">
    <property type="term" value="F:transcription coactivator activity"/>
    <property type="evidence" value="ECO:0000315"/>
    <property type="project" value="UniProtKB"/>
</dbReference>
<dbReference type="GO" id="GO:0002526">
    <property type="term" value="P:acute inflammatory response"/>
    <property type="evidence" value="ECO:0007669"/>
    <property type="project" value="Ensembl"/>
</dbReference>
<dbReference type="GO" id="GO:0044346">
    <property type="term" value="P:fibroblast apoptotic process"/>
    <property type="evidence" value="ECO:0007669"/>
    <property type="project" value="Ensembl"/>
</dbReference>
<dbReference type="GO" id="GO:0048144">
    <property type="term" value="P:fibroblast proliferation"/>
    <property type="evidence" value="ECO:0007669"/>
    <property type="project" value="Ensembl"/>
</dbReference>
<dbReference type="GO" id="GO:0042771">
    <property type="term" value="P:intrinsic apoptotic signaling pathway in response to DNA damage by p53 class mediator"/>
    <property type="evidence" value="ECO:0007669"/>
    <property type="project" value="Ensembl"/>
</dbReference>
<dbReference type="GO" id="GO:0008584">
    <property type="term" value="P:male gonad development"/>
    <property type="evidence" value="ECO:0007669"/>
    <property type="project" value="Ensembl"/>
</dbReference>
<dbReference type="GO" id="GO:0043066">
    <property type="term" value="P:negative regulation of apoptotic process"/>
    <property type="evidence" value="ECO:0000315"/>
    <property type="project" value="UniProtKB"/>
</dbReference>
<dbReference type="GO" id="GO:1902902">
    <property type="term" value="P:negative regulation of autophagosome assembly"/>
    <property type="evidence" value="ECO:0000315"/>
    <property type="project" value="UniProtKB"/>
</dbReference>
<dbReference type="GO" id="GO:0010507">
    <property type="term" value="P:negative regulation of autophagy"/>
    <property type="evidence" value="ECO:0000315"/>
    <property type="project" value="UniProtKB"/>
</dbReference>
<dbReference type="GO" id="GO:0010667">
    <property type="term" value="P:negative regulation of cardiac muscle cell apoptotic process"/>
    <property type="evidence" value="ECO:0000315"/>
    <property type="project" value="UniProtKB"/>
</dbReference>
<dbReference type="GO" id="GO:0045786">
    <property type="term" value="P:negative regulation of cell cycle"/>
    <property type="evidence" value="ECO:0000315"/>
    <property type="project" value="UniProtKB"/>
</dbReference>
<dbReference type="GO" id="GO:0008285">
    <property type="term" value="P:negative regulation of cell population proliferation"/>
    <property type="evidence" value="ECO:0000318"/>
    <property type="project" value="GO_Central"/>
</dbReference>
<dbReference type="GO" id="GO:0043433">
    <property type="term" value="P:negative regulation of DNA-binding transcription factor activity"/>
    <property type="evidence" value="ECO:0000315"/>
    <property type="project" value="UniProtKB"/>
</dbReference>
<dbReference type="GO" id="GO:1904036">
    <property type="term" value="P:negative regulation of epithelial cell apoptotic process"/>
    <property type="evidence" value="ECO:0000250"/>
    <property type="project" value="UniProtKB"/>
</dbReference>
<dbReference type="GO" id="GO:0050680">
    <property type="term" value="P:negative regulation of epithelial cell proliferation"/>
    <property type="evidence" value="ECO:0000250"/>
    <property type="project" value="UniProtKB"/>
</dbReference>
<dbReference type="GO" id="GO:0048147">
    <property type="term" value="P:negative regulation of fibroblast proliferation"/>
    <property type="evidence" value="ECO:0007669"/>
    <property type="project" value="Ensembl"/>
</dbReference>
<dbReference type="GO" id="GO:0045820">
    <property type="term" value="P:negative regulation of glycolytic process"/>
    <property type="evidence" value="ECO:0000315"/>
    <property type="project" value="UniProtKB"/>
</dbReference>
<dbReference type="GO" id="GO:0062099">
    <property type="term" value="P:negative regulation of programmed necrotic cell death"/>
    <property type="evidence" value="ECO:0000315"/>
    <property type="project" value="UniProtKB"/>
</dbReference>
<dbReference type="GO" id="GO:1904691">
    <property type="term" value="P:negative regulation of type B pancreatic cell proliferation"/>
    <property type="evidence" value="ECO:0000250"/>
    <property type="project" value="UniProtKB"/>
</dbReference>
<dbReference type="GO" id="GO:0045787">
    <property type="term" value="P:positive regulation of cell cycle"/>
    <property type="evidence" value="ECO:0000314"/>
    <property type="project" value="UniProtKB"/>
</dbReference>
<dbReference type="GO" id="GO:2000271">
    <property type="term" value="P:positive regulation of fibroblast apoptotic process"/>
    <property type="evidence" value="ECO:0007669"/>
    <property type="project" value="Ensembl"/>
</dbReference>
<dbReference type="GO" id="GO:2001244">
    <property type="term" value="P:positive regulation of intrinsic apoptotic signaling pathway"/>
    <property type="evidence" value="ECO:0000315"/>
    <property type="project" value="UniProtKB"/>
</dbReference>
<dbReference type="GO" id="GO:0150078">
    <property type="term" value="P:positive regulation of neuroinflammatory response"/>
    <property type="evidence" value="ECO:0000250"/>
    <property type="project" value="UniProtKB"/>
</dbReference>
<dbReference type="GO" id="GO:0043525">
    <property type="term" value="P:positive regulation of neuron apoptotic process"/>
    <property type="evidence" value="ECO:0000250"/>
    <property type="project" value="UniProtKB"/>
</dbReference>
<dbReference type="GO" id="GO:1903862">
    <property type="term" value="P:positive regulation of oxidative phosphorylation"/>
    <property type="evidence" value="ECO:0000315"/>
    <property type="project" value="UniProtKB"/>
</dbReference>
<dbReference type="GO" id="GO:1901800">
    <property type="term" value="P:positive regulation of proteasomal protein catabolic process"/>
    <property type="evidence" value="ECO:0000315"/>
    <property type="project" value="UniProtKB"/>
</dbReference>
<dbReference type="GO" id="GO:0065003">
    <property type="term" value="P:protein-containing complex assembly"/>
    <property type="evidence" value="ECO:0007669"/>
    <property type="project" value="Ensembl"/>
</dbReference>
<dbReference type="GO" id="GO:0010506">
    <property type="term" value="P:regulation of autophagy"/>
    <property type="evidence" value="ECO:0000250"/>
    <property type="project" value="UniProtKB"/>
</dbReference>
<dbReference type="GO" id="GO:2000194">
    <property type="term" value="P:regulation of female gonad development"/>
    <property type="evidence" value="ECO:0007669"/>
    <property type="project" value="Ensembl"/>
</dbReference>
<dbReference type="GO" id="GO:1905897">
    <property type="term" value="P:regulation of response to endoplasmic reticulum stress"/>
    <property type="evidence" value="ECO:0000315"/>
    <property type="project" value="UniProtKB"/>
</dbReference>
<dbReference type="GO" id="GO:0009636">
    <property type="term" value="P:response to toxic substance"/>
    <property type="evidence" value="ECO:0007669"/>
    <property type="project" value="Ensembl"/>
</dbReference>
<dbReference type="GO" id="GO:0035914">
    <property type="term" value="P:skeletal muscle cell differentiation"/>
    <property type="evidence" value="ECO:0007669"/>
    <property type="project" value="Ensembl"/>
</dbReference>
<dbReference type="DisProt" id="DP00510"/>
<dbReference type="InterPro" id="IPR018792">
    <property type="entry name" value="NUPR1-like"/>
</dbReference>
<dbReference type="PANTHER" id="PTHR17149:SF5">
    <property type="entry name" value="NUCLEAR PROTEIN 1"/>
    <property type="match status" value="1"/>
</dbReference>
<dbReference type="PANTHER" id="PTHR17149">
    <property type="entry name" value="NUCLEAR PROTEIN 1 AND 2"/>
    <property type="match status" value="1"/>
</dbReference>
<dbReference type="Pfam" id="PF10195">
    <property type="entry name" value="Phospho_p8"/>
    <property type="match status" value="1"/>
</dbReference>
<organism>
    <name type="scientific">Homo sapiens</name>
    <name type="common">Human</name>
    <dbReference type="NCBI Taxonomy" id="9606"/>
    <lineage>
        <taxon>Eukaryota</taxon>
        <taxon>Metazoa</taxon>
        <taxon>Chordata</taxon>
        <taxon>Craniata</taxon>
        <taxon>Vertebrata</taxon>
        <taxon>Euteleostomi</taxon>
        <taxon>Mammalia</taxon>
        <taxon>Eutheria</taxon>
        <taxon>Euarchontoglires</taxon>
        <taxon>Primates</taxon>
        <taxon>Haplorrhini</taxon>
        <taxon>Catarrhini</taxon>
        <taxon>Hominidae</taxon>
        <taxon>Homo</taxon>
    </lineage>
</organism>